<evidence type="ECO:0000250" key="1"/>
<evidence type="ECO:0000255" key="2"/>
<evidence type="ECO:0000305" key="3"/>
<name>SYM1_DEBHA</name>
<keyword id="KW-0472">Membrane</keyword>
<keyword id="KW-0496">Mitochondrion</keyword>
<keyword id="KW-0999">Mitochondrion inner membrane</keyword>
<keyword id="KW-1185">Reference proteome</keyword>
<keyword id="KW-0812">Transmembrane</keyword>
<keyword id="KW-1133">Transmembrane helix</keyword>
<reference key="1">
    <citation type="journal article" date="2004" name="Nature">
        <title>Genome evolution in yeasts.</title>
        <authorList>
            <person name="Dujon B."/>
            <person name="Sherman D."/>
            <person name="Fischer G."/>
            <person name="Durrens P."/>
            <person name="Casaregola S."/>
            <person name="Lafontaine I."/>
            <person name="de Montigny J."/>
            <person name="Marck C."/>
            <person name="Neuveglise C."/>
            <person name="Talla E."/>
            <person name="Goffard N."/>
            <person name="Frangeul L."/>
            <person name="Aigle M."/>
            <person name="Anthouard V."/>
            <person name="Babour A."/>
            <person name="Barbe V."/>
            <person name="Barnay S."/>
            <person name="Blanchin S."/>
            <person name="Beckerich J.-M."/>
            <person name="Beyne E."/>
            <person name="Bleykasten C."/>
            <person name="Boisrame A."/>
            <person name="Boyer J."/>
            <person name="Cattolico L."/>
            <person name="Confanioleri F."/>
            <person name="de Daruvar A."/>
            <person name="Despons L."/>
            <person name="Fabre E."/>
            <person name="Fairhead C."/>
            <person name="Ferry-Dumazet H."/>
            <person name="Groppi A."/>
            <person name="Hantraye F."/>
            <person name="Hennequin C."/>
            <person name="Jauniaux N."/>
            <person name="Joyet P."/>
            <person name="Kachouri R."/>
            <person name="Kerrest A."/>
            <person name="Koszul R."/>
            <person name="Lemaire M."/>
            <person name="Lesur I."/>
            <person name="Ma L."/>
            <person name="Muller H."/>
            <person name="Nicaud J.-M."/>
            <person name="Nikolski M."/>
            <person name="Oztas S."/>
            <person name="Ozier-Kalogeropoulos O."/>
            <person name="Pellenz S."/>
            <person name="Potier S."/>
            <person name="Richard G.-F."/>
            <person name="Straub M.-L."/>
            <person name="Suleau A."/>
            <person name="Swennen D."/>
            <person name="Tekaia F."/>
            <person name="Wesolowski-Louvel M."/>
            <person name="Westhof E."/>
            <person name="Wirth B."/>
            <person name="Zeniou-Meyer M."/>
            <person name="Zivanovic Y."/>
            <person name="Bolotin-Fukuhara M."/>
            <person name="Thierry A."/>
            <person name="Bouchier C."/>
            <person name="Caudron B."/>
            <person name="Scarpelli C."/>
            <person name="Gaillardin C."/>
            <person name="Weissenbach J."/>
            <person name="Wincker P."/>
            <person name="Souciet J.-L."/>
        </authorList>
    </citation>
    <scope>NUCLEOTIDE SEQUENCE [LARGE SCALE GENOMIC DNA]</scope>
    <source>
        <strain>ATCC 36239 / CBS 767 / BCRC 21394 / JCM 1990 / NBRC 0083 / IGC 2968</strain>
    </source>
</reference>
<feature type="chain" id="PRO_0000234411" description="Protein SYM1">
    <location>
        <begin position="1"/>
        <end position="206"/>
    </location>
</feature>
<feature type="transmembrane region" description="Helical" evidence="2">
    <location>
        <begin position="16"/>
        <end position="36"/>
    </location>
</feature>
<feature type="transmembrane region" description="Helical" evidence="2">
    <location>
        <begin position="103"/>
        <end position="123"/>
    </location>
</feature>
<feature type="transmembrane region" description="Helical" evidence="2">
    <location>
        <begin position="155"/>
        <end position="175"/>
    </location>
</feature>
<sequence>MASIYQKYSQLIAKRPLITNIITTGFLFGSGDYLAQTLYPSSSKYDYKRTLRATFYGSIIFAPIGDKWYRLLHKINFPFPKTKVSPTVSKVLNTLTKVGVDQLVFAPFIGIPLYYSVMSVLEFHDNPLQVAREKLHAHWFNTLKTNWVVWPTFQLFNFALIPVQFRLLVVNIFSIGWNCYLSSVLNHKHDFLIENITDVDKDEILI</sequence>
<gene>
    <name type="primary">SYM1</name>
    <name type="ordered locus">DEHA2F01760g</name>
</gene>
<dbReference type="EMBL" id="CR382138">
    <property type="protein sequence ID" value="CAG88747.1"/>
    <property type="molecule type" value="Genomic_DNA"/>
</dbReference>
<dbReference type="RefSeq" id="XP_460440.1">
    <property type="nucleotide sequence ID" value="XM_460440.1"/>
</dbReference>
<dbReference type="FunCoup" id="Q6BMY0">
    <property type="interactions" value="622"/>
</dbReference>
<dbReference type="STRING" id="284592.Q6BMY0"/>
<dbReference type="GeneID" id="2903848"/>
<dbReference type="KEGG" id="dha:DEHA2F01760g"/>
<dbReference type="VEuPathDB" id="FungiDB:DEHA2F01760g"/>
<dbReference type="eggNOG" id="KOG1944">
    <property type="taxonomic scope" value="Eukaryota"/>
</dbReference>
<dbReference type="HOGENOM" id="CLU_049109_8_1_1"/>
<dbReference type="InParanoid" id="Q6BMY0"/>
<dbReference type="OMA" id="CAPTMIG"/>
<dbReference type="OrthoDB" id="430207at2759"/>
<dbReference type="Proteomes" id="UP000000599">
    <property type="component" value="Chromosome F"/>
</dbReference>
<dbReference type="GO" id="GO:0005743">
    <property type="term" value="C:mitochondrial inner membrane"/>
    <property type="evidence" value="ECO:0007669"/>
    <property type="project" value="UniProtKB-SubCell"/>
</dbReference>
<dbReference type="InterPro" id="IPR007248">
    <property type="entry name" value="Mpv17_PMP22"/>
</dbReference>
<dbReference type="PANTHER" id="PTHR11266">
    <property type="entry name" value="PEROXISOMAL MEMBRANE PROTEIN 2, PXMP2 MPV17"/>
    <property type="match status" value="1"/>
</dbReference>
<dbReference type="PANTHER" id="PTHR11266:SF17">
    <property type="entry name" value="PROTEIN MPV17"/>
    <property type="match status" value="1"/>
</dbReference>
<dbReference type="Pfam" id="PF04117">
    <property type="entry name" value="Mpv17_PMP22"/>
    <property type="match status" value="1"/>
</dbReference>
<protein>
    <recommendedName>
        <fullName>Protein SYM1</fullName>
    </recommendedName>
</protein>
<comment type="function">
    <text evidence="1">May be involved in cellular response to stress. Required to maintain mitochondrial DNA (mtDNA) integrity and stability (By similarity).</text>
</comment>
<comment type="subcellular location">
    <subcellularLocation>
        <location evidence="1">Mitochondrion inner membrane</location>
        <topology evidence="1">Multi-pass membrane protein</topology>
    </subcellularLocation>
</comment>
<comment type="similarity">
    <text evidence="3">Belongs to the peroxisomal membrane protein PXMP2/4 family.</text>
</comment>
<accession>Q6BMY0</accession>
<organism>
    <name type="scientific">Debaryomyces hansenii (strain ATCC 36239 / CBS 767 / BCRC 21394 / JCM 1990 / NBRC 0083 / IGC 2968)</name>
    <name type="common">Yeast</name>
    <name type="synonym">Torulaspora hansenii</name>
    <dbReference type="NCBI Taxonomy" id="284592"/>
    <lineage>
        <taxon>Eukaryota</taxon>
        <taxon>Fungi</taxon>
        <taxon>Dikarya</taxon>
        <taxon>Ascomycota</taxon>
        <taxon>Saccharomycotina</taxon>
        <taxon>Pichiomycetes</taxon>
        <taxon>Debaryomycetaceae</taxon>
        <taxon>Debaryomyces</taxon>
    </lineage>
</organism>
<proteinExistence type="inferred from homology"/>